<keyword id="KW-0342">GTP-binding</keyword>
<keyword id="KW-0378">Hydrolase</keyword>
<keyword id="KW-0479">Metal-binding</keyword>
<keyword id="KW-0547">Nucleotide-binding</keyword>
<keyword id="KW-1185">Reference proteome</keyword>
<keyword id="KW-0686">Riboflavin biosynthesis</keyword>
<keyword id="KW-0862">Zinc</keyword>
<feature type="chain" id="PRO_1000193763" description="GTP cyclohydrolase-2">
    <location>
        <begin position="1"/>
        <end position="196"/>
    </location>
</feature>
<feature type="active site" description="Proton acceptor" evidence="1">
    <location>
        <position position="126"/>
    </location>
</feature>
<feature type="active site" description="Nucleophile" evidence="1">
    <location>
        <position position="128"/>
    </location>
</feature>
<feature type="binding site" evidence="1">
    <location>
        <begin position="49"/>
        <end position="53"/>
    </location>
    <ligand>
        <name>GTP</name>
        <dbReference type="ChEBI" id="CHEBI:37565"/>
    </ligand>
</feature>
<feature type="binding site" evidence="1">
    <location>
        <position position="54"/>
    </location>
    <ligand>
        <name>Zn(2+)</name>
        <dbReference type="ChEBI" id="CHEBI:29105"/>
        <note>catalytic</note>
    </ligand>
</feature>
<feature type="binding site" evidence="1">
    <location>
        <position position="65"/>
    </location>
    <ligand>
        <name>Zn(2+)</name>
        <dbReference type="ChEBI" id="CHEBI:29105"/>
        <note>catalytic</note>
    </ligand>
</feature>
<feature type="binding site" evidence="1">
    <location>
        <position position="67"/>
    </location>
    <ligand>
        <name>Zn(2+)</name>
        <dbReference type="ChEBI" id="CHEBI:29105"/>
        <note>catalytic</note>
    </ligand>
</feature>
<feature type="binding site" evidence="1">
    <location>
        <position position="70"/>
    </location>
    <ligand>
        <name>GTP</name>
        <dbReference type="ChEBI" id="CHEBI:37565"/>
    </ligand>
</feature>
<feature type="binding site" evidence="1">
    <location>
        <begin position="92"/>
        <end position="94"/>
    </location>
    <ligand>
        <name>GTP</name>
        <dbReference type="ChEBI" id="CHEBI:37565"/>
    </ligand>
</feature>
<feature type="binding site" evidence="1">
    <location>
        <position position="114"/>
    </location>
    <ligand>
        <name>GTP</name>
        <dbReference type="ChEBI" id="CHEBI:37565"/>
    </ligand>
</feature>
<feature type="binding site" evidence="1">
    <location>
        <position position="149"/>
    </location>
    <ligand>
        <name>GTP</name>
        <dbReference type="ChEBI" id="CHEBI:37565"/>
    </ligand>
</feature>
<feature type="binding site" evidence="1">
    <location>
        <position position="154"/>
    </location>
    <ligand>
        <name>GTP</name>
        <dbReference type="ChEBI" id="CHEBI:37565"/>
    </ligand>
</feature>
<proteinExistence type="inferred from homology"/>
<organism>
    <name type="scientific">Escherichia coli O127:H6 (strain E2348/69 / EPEC)</name>
    <dbReference type="NCBI Taxonomy" id="574521"/>
    <lineage>
        <taxon>Bacteria</taxon>
        <taxon>Pseudomonadati</taxon>
        <taxon>Pseudomonadota</taxon>
        <taxon>Gammaproteobacteria</taxon>
        <taxon>Enterobacterales</taxon>
        <taxon>Enterobacteriaceae</taxon>
        <taxon>Escherichia</taxon>
    </lineage>
</organism>
<sequence>MQLKRVAEAKLPTPWGDFLMVGFEELATGHDHVALVYGDISGHTPVLARVHSECLTGDALFSLRCDCGFQLEAALTQIAEEGRGILLYHRQEGRNIGLLNKIRAYALQDQGYDTVEANHQLGFAADERDFTLCADMFKLLGVNEVRLLTNNPKKVEILTEAGINIVERVPLIVGRNPNNEHYLDTKAEKMGHLLNK</sequence>
<reference key="1">
    <citation type="journal article" date="2009" name="J. Bacteriol.">
        <title>Complete genome sequence and comparative genome analysis of enteropathogenic Escherichia coli O127:H6 strain E2348/69.</title>
        <authorList>
            <person name="Iguchi A."/>
            <person name="Thomson N.R."/>
            <person name="Ogura Y."/>
            <person name="Saunders D."/>
            <person name="Ooka T."/>
            <person name="Henderson I.R."/>
            <person name="Harris D."/>
            <person name="Asadulghani M."/>
            <person name="Kurokawa K."/>
            <person name="Dean P."/>
            <person name="Kenny B."/>
            <person name="Quail M.A."/>
            <person name="Thurston S."/>
            <person name="Dougan G."/>
            <person name="Hayashi T."/>
            <person name="Parkhill J."/>
            <person name="Frankel G."/>
        </authorList>
    </citation>
    <scope>NUCLEOTIDE SEQUENCE [LARGE SCALE GENOMIC DNA]</scope>
    <source>
        <strain>E2348/69 / EPEC</strain>
    </source>
</reference>
<comment type="function">
    <text evidence="1">Catalyzes the conversion of GTP to 2,5-diamino-6-ribosylamino-4(3H)-pyrimidinone 5'-phosphate (DARP), formate and pyrophosphate.</text>
</comment>
<comment type="catalytic activity">
    <reaction evidence="1">
        <text>GTP + 4 H2O = 2,5-diamino-6-hydroxy-4-(5-phosphoribosylamino)-pyrimidine + formate + 2 phosphate + 3 H(+)</text>
        <dbReference type="Rhea" id="RHEA:23704"/>
        <dbReference type="ChEBI" id="CHEBI:15377"/>
        <dbReference type="ChEBI" id="CHEBI:15378"/>
        <dbReference type="ChEBI" id="CHEBI:15740"/>
        <dbReference type="ChEBI" id="CHEBI:37565"/>
        <dbReference type="ChEBI" id="CHEBI:43474"/>
        <dbReference type="ChEBI" id="CHEBI:58614"/>
        <dbReference type="EC" id="3.5.4.25"/>
    </reaction>
</comment>
<comment type="cofactor">
    <cofactor evidence="1">
        <name>Zn(2+)</name>
        <dbReference type="ChEBI" id="CHEBI:29105"/>
    </cofactor>
    <text evidence="1">Binds 1 zinc ion per subunit.</text>
</comment>
<comment type="pathway">
    <text evidence="1">Cofactor biosynthesis; riboflavin biosynthesis; 5-amino-6-(D-ribitylamino)uracil from GTP: step 1/4.</text>
</comment>
<comment type="subunit">
    <text evidence="1">Homodimer.</text>
</comment>
<comment type="similarity">
    <text evidence="1">Belongs to the GTP cyclohydrolase II family.</text>
</comment>
<evidence type="ECO:0000255" key="1">
    <source>
        <dbReference type="HAMAP-Rule" id="MF_00179"/>
    </source>
</evidence>
<protein>
    <recommendedName>
        <fullName evidence="1">GTP cyclohydrolase-2</fullName>
        <ecNumber evidence="1">3.5.4.25</ecNumber>
    </recommendedName>
    <alternativeName>
        <fullName evidence="1">GTP cyclohydrolase II</fullName>
    </alternativeName>
</protein>
<dbReference type="EC" id="3.5.4.25" evidence="1"/>
<dbReference type="EMBL" id="FM180568">
    <property type="protein sequence ID" value="CAS09017.1"/>
    <property type="molecule type" value="Genomic_DNA"/>
</dbReference>
<dbReference type="RefSeq" id="WP_001176295.1">
    <property type="nucleotide sequence ID" value="NC_011601.1"/>
</dbReference>
<dbReference type="SMR" id="B7UR85"/>
<dbReference type="GeneID" id="86946614"/>
<dbReference type="KEGG" id="ecg:E2348C_1469"/>
<dbReference type="HOGENOM" id="CLU_020273_2_1_6"/>
<dbReference type="UniPathway" id="UPA00275">
    <property type="reaction ID" value="UER00400"/>
</dbReference>
<dbReference type="Proteomes" id="UP000008205">
    <property type="component" value="Chromosome"/>
</dbReference>
<dbReference type="GO" id="GO:0005829">
    <property type="term" value="C:cytosol"/>
    <property type="evidence" value="ECO:0007669"/>
    <property type="project" value="TreeGrafter"/>
</dbReference>
<dbReference type="GO" id="GO:0005525">
    <property type="term" value="F:GTP binding"/>
    <property type="evidence" value="ECO:0007669"/>
    <property type="project" value="UniProtKB-KW"/>
</dbReference>
<dbReference type="GO" id="GO:0003935">
    <property type="term" value="F:GTP cyclohydrolase II activity"/>
    <property type="evidence" value="ECO:0007669"/>
    <property type="project" value="UniProtKB-UniRule"/>
</dbReference>
<dbReference type="GO" id="GO:0008270">
    <property type="term" value="F:zinc ion binding"/>
    <property type="evidence" value="ECO:0007669"/>
    <property type="project" value="UniProtKB-UniRule"/>
</dbReference>
<dbReference type="GO" id="GO:0009231">
    <property type="term" value="P:riboflavin biosynthetic process"/>
    <property type="evidence" value="ECO:0007669"/>
    <property type="project" value="UniProtKB-UniRule"/>
</dbReference>
<dbReference type="CDD" id="cd00641">
    <property type="entry name" value="GTP_cyclohydro2"/>
    <property type="match status" value="1"/>
</dbReference>
<dbReference type="FunFam" id="3.40.50.10990:FF:000002">
    <property type="entry name" value="GTP cyclohydrolase-2"/>
    <property type="match status" value="1"/>
</dbReference>
<dbReference type="Gene3D" id="3.40.50.10990">
    <property type="entry name" value="GTP cyclohydrolase II"/>
    <property type="match status" value="1"/>
</dbReference>
<dbReference type="HAMAP" id="MF_00179">
    <property type="entry name" value="RibA"/>
    <property type="match status" value="1"/>
</dbReference>
<dbReference type="InterPro" id="IPR032677">
    <property type="entry name" value="GTP_cyclohydro_II"/>
</dbReference>
<dbReference type="InterPro" id="IPR000926">
    <property type="entry name" value="RibA"/>
</dbReference>
<dbReference type="InterPro" id="IPR036144">
    <property type="entry name" value="RibA-like_sf"/>
</dbReference>
<dbReference type="NCBIfam" id="NF001591">
    <property type="entry name" value="PRK00393.1"/>
    <property type="match status" value="1"/>
</dbReference>
<dbReference type="NCBIfam" id="TIGR00505">
    <property type="entry name" value="ribA"/>
    <property type="match status" value="1"/>
</dbReference>
<dbReference type="PANTHER" id="PTHR21327:SF18">
    <property type="entry name" value="3,4-DIHYDROXY-2-BUTANONE 4-PHOSPHATE SYNTHASE"/>
    <property type="match status" value="1"/>
</dbReference>
<dbReference type="PANTHER" id="PTHR21327">
    <property type="entry name" value="GTP CYCLOHYDROLASE II-RELATED"/>
    <property type="match status" value="1"/>
</dbReference>
<dbReference type="Pfam" id="PF00925">
    <property type="entry name" value="GTP_cyclohydro2"/>
    <property type="match status" value="1"/>
</dbReference>
<dbReference type="SUPFAM" id="SSF142695">
    <property type="entry name" value="RibA-like"/>
    <property type="match status" value="1"/>
</dbReference>
<accession>B7UR85</accession>
<gene>
    <name evidence="1" type="primary">ribA</name>
    <name type="ordered locus">E2348C_1469</name>
</gene>
<name>RIBA_ECO27</name>